<evidence type="ECO:0000305" key="1"/>
<accession>Q5HG67</accession>
<proteinExistence type="inferred from homology"/>
<sequence>MQIELTDAAVTWFKNELELPENNKVLVFFVRYGGEFQLKQGFSPAFTVEPKEDVDIGYEQQYDDLNVVVAEKDLWYFEDDHIIVNVVDHEDEISYSTK</sequence>
<protein>
    <recommendedName>
        <fullName>Uncharacterized protein SACOL1387</fullName>
    </recommendedName>
</protein>
<dbReference type="EMBL" id="CP000046">
    <property type="protein sequence ID" value="AAW36636.1"/>
    <property type="molecule type" value="Genomic_DNA"/>
</dbReference>
<dbReference type="RefSeq" id="WP_001165377.1">
    <property type="nucleotide sequence ID" value="NZ_JBGOFO010000003.1"/>
</dbReference>
<dbReference type="SMR" id="Q5HG67"/>
<dbReference type="KEGG" id="sac:SACOL1387"/>
<dbReference type="HOGENOM" id="CLU_163967_0_0_9"/>
<dbReference type="Proteomes" id="UP000000530">
    <property type="component" value="Chromosome"/>
</dbReference>
<dbReference type="InterPro" id="IPR035903">
    <property type="entry name" value="HesB-like_dom_sf"/>
</dbReference>
<dbReference type="InterPro" id="IPR008326">
    <property type="entry name" value="PdhI-like"/>
</dbReference>
<dbReference type="PIRSF" id="PIRSF034852">
    <property type="entry name" value="UCP034852"/>
    <property type="match status" value="1"/>
</dbReference>
<dbReference type="SUPFAM" id="SSF89360">
    <property type="entry name" value="HesB-like domain"/>
    <property type="match status" value="1"/>
</dbReference>
<reference key="1">
    <citation type="journal article" date="2005" name="J. Bacteriol.">
        <title>Insights on evolution of virulence and resistance from the complete genome analysis of an early methicillin-resistant Staphylococcus aureus strain and a biofilm-producing methicillin-resistant Staphylococcus epidermidis strain.</title>
        <authorList>
            <person name="Gill S.R."/>
            <person name="Fouts D.E."/>
            <person name="Archer G.L."/>
            <person name="Mongodin E.F."/>
            <person name="DeBoy R.T."/>
            <person name="Ravel J."/>
            <person name="Paulsen I.T."/>
            <person name="Kolonay J.F."/>
            <person name="Brinkac L.M."/>
            <person name="Beanan M.J."/>
            <person name="Dodson R.J."/>
            <person name="Daugherty S.C."/>
            <person name="Madupu R."/>
            <person name="Angiuoli S.V."/>
            <person name="Durkin A.S."/>
            <person name="Haft D.H."/>
            <person name="Vamathevan J.J."/>
            <person name="Khouri H."/>
            <person name="Utterback T.R."/>
            <person name="Lee C."/>
            <person name="Dimitrov G."/>
            <person name="Jiang L."/>
            <person name="Qin H."/>
            <person name="Weidman J."/>
            <person name="Tran K."/>
            <person name="Kang K.H."/>
            <person name="Hance I.R."/>
            <person name="Nelson K.E."/>
            <person name="Fraser C.M."/>
        </authorList>
    </citation>
    <scope>NUCLEOTIDE SEQUENCE [LARGE SCALE GENOMIC DNA]</scope>
    <source>
        <strain>COL</strain>
    </source>
</reference>
<feature type="chain" id="PRO_0000300083" description="Uncharacterized protein SACOL1387">
    <location>
        <begin position="1"/>
        <end position="98"/>
    </location>
</feature>
<name>Y1387_STAAC</name>
<gene>
    <name type="ordered locus">SACOL1387</name>
</gene>
<comment type="similarity">
    <text evidence="1">Belongs to the HesB/IscA family.</text>
</comment>
<organism>
    <name type="scientific">Staphylococcus aureus (strain COL)</name>
    <dbReference type="NCBI Taxonomy" id="93062"/>
    <lineage>
        <taxon>Bacteria</taxon>
        <taxon>Bacillati</taxon>
        <taxon>Bacillota</taxon>
        <taxon>Bacilli</taxon>
        <taxon>Bacillales</taxon>
        <taxon>Staphylococcaceae</taxon>
        <taxon>Staphylococcus</taxon>
    </lineage>
</organism>